<name>MIAB_COXB1</name>
<organism>
    <name type="scientific">Coxiella burnetii (strain CbuK_Q154)</name>
    <name type="common">Coxiella burnetii (strain Q154)</name>
    <dbReference type="NCBI Taxonomy" id="434924"/>
    <lineage>
        <taxon>Bacteria</taxon>
        <taxon>Pseudomonadati</taxon>
        <taxon>Pseudomonadota</taxon>
        <taxon>Gammaproteobacteria</taxon>
        <taxon>Legionellales</taxon>
        <taxon>Coxiellaceae</taxon>
        <taxon>Coxiella</taxon>
    </lineage>
</organism>
<accession>B6J853</accession>
<proteinExistence type="inferred from homology"/>
<dbReference type="EC" id="2.8.4.3" evidence="1"/>
<dbReference type="EMBL" id="CP001020">
    <property type="protein sequence ID" value="ACJ20452.1"/>
    <property type="molecule type" value="Genomic_DNA"/>
</dbReference>
<dbReference type="RefSeq" id="WP_005771098.1">
    <property type="nucleotide sequence ID" value="NC_011528.1"/>
</dbReference>
<dbReference type="SMR" id="B6J853"/>
<dbReference type="KEGG" id="cbc:CbuK_1268"/>
<dbReference type="HOGENOM" id="CLU_018697_2_0_6"/>
<dbReference type="GO" id="GO:0005829">
    <property type="term" value="C:cytosol"/>
    <property type="evidence" value="ECO:0007669"/>
    <property type="project" value="TreeGrafter"/>
</dbReference>
<dbReference type="GO" id="GO:0051539">
    <property type="term" value="F:4 iron, 4 sulfur cluster binding"/>
    <property type="evidence" value="ECO:0007669"/>
    <property type="project" value="UniProtKB-UniRule"/>
</dbReference>
<dbReference type="GO" id="GO:0046872">
    <property type="term" value="F:metal ion binding"/>
    <property type="evidence" value="ECO:0007669"/>
    <property type="project" value="UniProtKB-KW"/>
</dbReference>
<dbReference type="GO" id="GO:0035597">
    <property type="term" value="F:N6-isopentenyladenosine methylthiotransferase activity"/>
    <property type="evidence" value="ECO:0007669"/>
    <property type="project" value="TreeGrafter"/>
</dbReference>
<dbReference type="CDD" id="cd01335">
    <property type="entry name" value="Radical_SAM"/>
    <property type="match status" value="1"/>
</dbReference>
<dbReference type="FunFam" id="3.40.50.12160:FF:000001">
    <property type="entry name" value="tRNA-2-methylthio-N(6)-dimethylallyladenosine synthase"/>
    <property type="match status" value="1"/>
</dbReference>
<dbReference type="FunFam" id="3.80.30.20:FF:000001">
    <property type="entry name" value="tRNA-2-methylthio-N(6)-dimethylallyladenosine synthase 2"/>
    <property type="match status" value="1"/>
</dbReference>
<dbReference type="Gene3D" id="3.40.50.12160">
    <property type="entry name" value="Methylthiotransferase, N-terminal domain"/>
    <property type="match status" value="1"/>
</dbReference>
<dbReference type="Gene3D" id="3.80.30.20">
    <property type="entry name" value="tm_1862 like domain"/>
    <property type="match status" value="1"/>
</dbReference>
<dbReference type="HAMAP" id="MF_01864">
    <property type="entry name" value="tRNA_metthiotr_MiaB"/>
    <property type="match status" value="1"/>
</dbReference>
<dbReference type="InterPro" id="IPR006638">
    <property type="entry name" value="Elp3/MiaA/NifB-like_rSAM"/>
</dbReference>
<dbReference type="InterPro" id="IPR005839">
    <property type="entry name" value="Methylthiotransferase"/>
</dbReference>
<dbReference type="InterPro" id="IPR020612">
    <property type="entry name" value="Methylthiotransferase_CS"/>
</dbReference>
<dbReference type="InterPro" id="IPR013848">
    <property type="entry name" value="Methylthiotransferase_N"/>
</dbReference>
<dbReference type="InterPro" id="IPR038135">
    <property type="entry name" value="Methylthiotransferase_N_sf"/>
</dbReference>
<dbReference type="InterPro" id="IPR006463">
    <property type="entry name" value="MiaB_methiolase"/>
</dbReference>
<dbReference type="InterPro" id="IPR007197">
    <property type="entry name" value="rSAM"/>
</dbReference>
<dbReference type="InterPro" id="IPR023404">
    <property type="entry name" value="rSAM_horseshoe"/>
</dbReference>
<dbReference type="InterPro" id="IPR002792">
    <property type="entry name" value="TRAM_dom"/>
</dbReference>
<dbReference type="NCBIfam" id="TIGR01574">
    <property type="entry name" value="miaB-methiolase"/>
    <property type="match status" value="1"/>
</dbReference>
<dbReference type="NCBIfam" id="TIGR00089">
    <property type="entry name" value="MiaB/RimO family radical SAM methylthiotransferase"/>
    <property type="match status" value="1"/>
</dbReference>
<dbReference type="PANTHER" id="PTHR43020">
    <property type="entry name" value="CDK5 REGULATORY SUBUNIT-ASSOCIATED PROTEIN 1"/>
    <property type="match status" value="1"/>
</dbReference>
<dbReference type="PANTHER" id="PTHR43020:SF2">
    <property type="entry name" value="MITOCHONDRIAL TRNA METHYLTHIOTRANSFERASE CDK5RAP1"/>
    <property type="match status" value="1"/>
</dbReference>
<dbReference type="Pfam" id="PF04055">
    <property type="entry name" value="Radical_SAM"/>
    <property type="match status" value="1"/>
</dbReference>
<dbReference type="Pfam" id="PF01938">
    <property type="entry name" value="TRAM"/>
    <property type="match status" value="1"/>
</dbReference>
<dbReference type="Pfam" id="PF00919">
    <property type="entry name" value="UPF0004"/>
    <property type="match status" value="1"/>
</dbReference>
<dbReference type="SFLD" id="SFLDF00273">
    <property type="entry name" value="(dimethylallyl)adenosine_tRNA"/>
    <property type="match status" value="1"/>
</dbReference>
<dbReference type="SFLD" id="SFLDG01082">
    <property type="entry name" value="B12-binding_domain_containing"/>
    <property type="match status" value="1"/>
</dbReference>
<dbReference type="SFLD" id="SFLDS00029">
    <property type="entry name" value="Radical_SAM"/>
    <property type="match status" value="1"/>
</dbReference>
<dbReference type="SMART" id="SM00729">
    <property type="entry name" value="Elp3"/>
    <property type="match status" value="1"/>
</dbReference>
<dbReference type="SUPFAM" id="SSF102114">
    <property type="entry name" value="Radical SAM enzymes"/>
    <property type="match status" value="1"/>
</dbReference>
<dbReference type="PROSITE" id="PS51449">
    <property type="entry name" value="MTTASE_N"/>
    <property type="match status" value="1"/>
</dbReference>
<dbReference type="PROSITE" id="PS01278">
    <property type="entry name" value="MTTASE_RADICAL"/>
    <property type="match status" value="1"/>
</dbReference>
<dbReference type="PROSITE" id="PS51918">
    <property type="entry name" value="RADICAL_SAM"/>
    <property type="match status" value="1"/>
</dbReference>
<dbReference type="PROSITE" id="PS50926">
    <property type="entry name" value="TRAM"/>
    <property type="match status" value="1"/>
</dbReference>
<protein>
    <recommendedName>
        <fullName evidence="1">tRNA-2-methylthio-N(6)-dimethylallyladenosine synthase</fullName>
        <ecNumber evidence="1">2.8.4.3</ecNumber>
    </recommendedName>
    <alternativeName>
        <fullName evidence="1">(Dimethylallyl)adenosine tRNA methylthiotransferase MiaB</fullName>
    </alternativeName>
    <alternativeName>
        <fullName evidence="1">tRNA-i(6)A37 methylthiotransferase</fullName>
    </alternativeName>
</protein>
<evidence type="ECO:0000255" key="1">
    <source>
        <dbReference type="HAMAP-Rule" id="MF_01864"/>
    </source>
</evidence>
<evidence type="ECO:0000255" key="2">
    <source>
        <dbReference type="PROSITE-ProRule" id="PRU01266"/>
    </source>
</evidence>
<keyword id="KW-0004">4Fe-4S</keyword>
<keyword id="KW-0963">Cytoplasm</keyword>
<keyword id="KW-0408">Iron</keyword>
<keyword id="KW-0411">Iron-sulfur</keyword>
<keyword id="KW-0479">Metal-binding</keyword>
<keyword id="KW-0949">S-adenosyl-L-methionine</keyword>
<keyword id="KW-0808">Transferase</keyword>
<keyword id="KW-0819">tRNA processing</keyword>
<comment type="function">
    <text evidence="1">Catalyzes the methylthiolation of N6-(dimethylallyl)adenosine (i(6)A), leading to the formation of 2-methylthio-N6-(dimethylallyl)adenosine (ms(2)i(6)A) at position 37 in tRNAs that read codons beginning with uridine.</text>
</comment>
<comment type="catalytic activity">
    <reaction evidence="1">
        <text>N(6)-dimethylallyladenosine(37) in tRNA + (sulfur carrier)-SH + AH2 + 2 S-adenosyl-L-methionine = 2-methylsulfanyl-N(6)-dimethylallyladenosine(37) in tRNA + (sulfur carrier)-H + 5'-deoxyadenosine + L-methionine + A + S-adenosyl-L-homocysteine + 2 H(+)</text>
        <dbReference type="Rhea" id="RHEA:37067"/>
        <dbReference type="Rhea" id="RHEA-COMP:10375"/>
        <dbReference type="Rhea" id="RHEA-COMP:10376"/>
        <dbReference type="Rhea" id="RHEA-COMP:14737"/>
        <dbReference type="Rhea" id="RHEA-COMP:14739"/>
        <dbReference type="ChEBI" id="CHEBI:13193"/>
        <dbReference type="ChEBI" id="CHEBI:15378"/>
        <dbReference type="ChEBI" id="CHEBI:17319"/>
        <dbReference type="ChEBI" id="CHEBI:17499"/>
        <dbReference type="ChEBI" id="CHEBI:29917"/>
        <dbReference type="ChEBI" id="CHEBI:57844"/>
        <dbReference type="ChEBI" id="CHEBI:57856"/>
        <dbReference type="ChEBI" id="CHEBI:59789"/>
        <dbReference type="ChEBI" id="CHEBI:64428"/>
        <dbReference type="ChEBI" id="CHEBI:74415"/>
        <dbReference type="ChEBI" id="CHEBI:74417"/>
        <dbReference type="EC" id="2.8.4.3"/>
    </reaction>
</comment>
<comment type="cofactor">
    <cofactor evidence="1">
        <name>[4Fe-4S] cluster</name>
        <dbReference type="ChEBI" id="CHEBI:49883"/>
    </cofactor>
    <text evidence="1">Binds 2 [4Fe-4S] clusters. One cluster is coordinated with 3 cysteines and an exchangeable S-adenosyl-L-methionine.</text>
</comment>
<comment type="subunit">
    <text evidence="1">Monomer.</text>
</comment>
<comment type="subcellular location">
    <subcellularLocation>
        <location evidence="1">Cytoplasm</location>
    </subcellularLocation>
</comment>
<comment type="similarity">
    <text evidence="1">Belongs to the methylthiotransferase family. MiaB subfamily.</text>
</comment>
<gene>
    <name evidence="1" type="primary">miaB</name>
    <name type="ordered locus">CbuK_1268</name>
</gene>
<reference key="1">
    <citation type="journal article" date="2009" name="Infect. Immun.">
        <title>Comparative genomics reveal extensive transposon-mediated genomic plasticity and diversity among potential effector proteins within the genus Coxiella.</title>
        <authorList>
            <person name="Beare P.A."/>
            <person name="Unsworth N."/>
            <person name="Andoh M."/>
            <person name="Voth D.E."/>
            <person name="Omsland A."/>
            <person name="Gilk S.D."/>
            <person name="Williams K.P."/>
            <person name="Sobral B.W."/>
            <person name="Kupko J.J. III"/>
            <person name="Porcella S.F."/>
            <person name="Samuel J.E."/>
            <person name="Heinzen R.A."/>
        </authorList>
    </citation>
    <scope>NUCLEOTIDE SEQUENCE [LARGE SCALE GENOMIC DNA]</scope>
    <source>
        <strain>CbuK_Q154</strain>
    </source>
</reference>
<feature type="chain" id="PRO_0000374246" description="tRNA-2-methylthio-N(6)-dimethylallyladenosine synthase">
    <location>
        <begin position="1"/>
        <end position="439"/>
    </location>
</feature>
<feature type="domain" description="MTTase N-terminal" evidence="1">
    <location>
        <begin position="2"/>
        <end position="119"/>
    </location>
</feature>
<feature type="domain" description="Radical SAM core" evidence="2">
    <location>
        <begin position="142"/>
        <end position="374"/>
    </location>
</feature>
<feature type="domain" description="TRAM" evidence="1">
    <location>
        <begin position="377"/>
        <end position="439"/>
    </location>
</feature>
<feature type="binding site" evidence="1">
    <location>
        <position position="11"/>
    </location>
    <ligand>
        <name>[4Fe-4S] cluster</name>
        <dbReference type="ChEBI" id="CHEBI:49883"/>
        <label>1</label>
    </ligand>
</feature>
<feature type="binding site" evidence="1">
    <location>
        <position position="48"/>
    </location>
    <ligand>
        <name>[4Fe-4S] cluster</name>
        <dbReference type="ChEBI" id="CHEBI:49883"/>
        <label>1</label>
    </ligand>
</feature>
<feature type="binding site" evidence="1">
    <location>
        <position position="82"/>
    </location>
    <ligand>
        <name>[4Fe-4S] cluster</name>
        <dbReference type="ChEBI" id="CHEBI:49883"/>
        <label>1</label>
    </ligand>
</feature>
<feature type="binding site" evidence="1">
    <location>
        <position position="156"/>
    </location>
    <ligand>
        <name>[4Fe-4S] cluster</name>
        <dbReference type="ChEBI" id="CHEBI:49883"/>
        <label>2</label>
        <note>4Fe-4S-S-AdoMet</note>
    </ligand>
</feature>
<feature type="binding site" evidence="1">
    <location>
        <position position="160"/>
    </location>
    <ligand>
        <name>[4Fe-4S] cluster</name>
        <dbReference type="ChEBI" id="CHEBI:49883"/>
        <label>2</label>
        <note>4Fe-4S-S-AdoMet</note>
    </ligand>
</feature>
<feature type="binding site" evidence="1">
    <location>
        <position position="163"/>
    </location>
    <ligand>
        <name>[4Fe-4S] cluster</name>
        <dbReference type="ChEBI" id="CHEBI:49883"/>
        <label>2</label>
        <note>4Fe-4S-S-AdoMet</note>
    </ligand>
</feature>
<sequence>MKKLYLKTHGCQMNEYDSAKMADVLKFSHGLELTEDPAVADVFLLNTCSVREKAQTKVFSELGRWRPFKEKRPHVVIGVGGCVASQEGETILKQAPFVDIVFGPQTLHRLPDLLDSVIQKRKSVVDITFPEIEKFDRLPQPRAEGPSAFVSIMEGCSKYCTFCVVPYTRGEEISRPFDDVIAEVASLCEQGVREITLLGQNVNDYRGLMHDGQVADLALLIHYLAAMDNIERIRFTTSHPSAFSENLIDAYAEEPKLANHLHLPVQSGSDRILAAMKRNYTVLEYKSKIRKLRAVRPDISLSSDFIIGFPGETDADFEATMNLIHDMGFDHSFSFIYSPRPGTPAAQLPDDVPMAVKKERLAILQNRINAKAAEISQSMVGTQQRILVTGPSKKYPDQLSGRTENNRVVNFNGDTPLIGQMVTIKIKEARPYSLWGEIC</sequence>